<name>SERA3_ARATH</name>
<comment type="function">
    <text evidence="5 6">Involved in the plastidial phosphorylated pathway of serine biosynthesis (PPSB).</text>
</comment>
<comment type="catalytic activity">
    <reaction evidence="6">
        <text>(2R)-3-phosphoglycerate + NAD(+) = 3-phosphooxypyruvate + NADH + H(+)</text>
        <dbReference type="Rhea" id="RHEA:12641"/>
        <dbReference type="ChEBI" id="CHEBI:15378"/>
        <dbReference type="ChEBI" id="CHEBI:18110"/>
        <dbReference type="ChEBI" id="CHEBI:57540"/>
        <dbReference type="ChEBI" id="CHEBI:57945"/>
        <dbReference type="ChEBI" id="CHEBI:58272"/>
        <dbReference type="EC" id="1.1.1.95"/>
    </reaction>
</comment>
<comment type="activity regulation">
    <text evidence="6">Partially inhibited by 1 mM serine.</text>
</comment>
<comment type="biophysicochemical properties">
    <kinetics>
        <KM evidence="6">1.006 mM for 3-phospho-D-glycerate (at pH 8.1)</KM>
        <KM evidence="6">0.239 mM for NAD(+) (at pH 8.1)</KM>
        <KM evidence="6">2.559 mM for 3-phospho-D-glycerate (at pH 7.2)</KM>
        <KM evidence="6">0.551 mM for NAD(+) (at pH 7.2)</KM>
        <Vmax evidence="6">137.6 umol/min/mg enzyme (at pH 8.1)</Vmax>
        <Vmax evidence="6">93.7 umol/min/mg enzyme (at pH 7.2)</Vmax>
    </kinetics>
</comment>
<comment type="pathway">
    <text>Amino-acid biosynthesis; L-serine biosynthesis; L-serine from 3-phospho-D-glycerate: step 1/3.</text>
</comment>
<comment type="subcellular location">
    <subcellularLocation>
        <location evidence="5 6">Plastid</location>
        <location evidence="5 6">Chloroplast</location>
    </subcellularLocation>
</comment>
<comment type="tissue specificity">
    <text evidence="5 6">Expressed in aerial parts. Not detected in roots and meristematic tissue. Expressed in cotyledons, adult leaves, stigma and anther filaments. Detected in the embryo.</text>
</comment>
<comment type="induction">
    <text evidence="5">Up-regulated in the aerial parts by dark treatment. Not regulated by high CO(2) levels.</text>
</comment>
<comment type="disruption phenotype">
    <text evidence="5">No visible phenotype.</text>
</comment>
<comment type="similarity">
    <text evidence="7">Belongs to the D-isomer specific 2-hydroxyacid dehydrogenase family.</text>
</comment>
<feature type="transit peptide" description="Chloroplast" evidence="3">
    <location>
        <begin position="1"/>
        <end position="38"/>
    </location>
</feature>
<feature type="chain" id="PRO_0000430237" description="D-3-phosphoglycerate dehydrogenase 3, chloroplastic">
    <location>
        <begin position="39"/>
        <end position="588"/>
    </location>
</feature>
<feature type="domain" description="ACT" evidence="4">
    <location>
        <begin position="516"/>
        <end position="588"/>
    </location>
</feature>
<feature type="active site" evidence="1">
    <location>
        <position position="276"/>
    </location>
</feature>
<feature type="active site" evidence="1">
    <location>
        <position position="305"/>
    </location>
</feature>
<feature type="active site" description="Proton donor" evidence="1">
    <location>
        <position position="324"/>
    </location>
</feature>
<feature type="binding site" evidence="2">
    <location>
        <begin position="195"/>
        <end position="196"/>
    </location>
    <ligand>
        <name>NAD(+)</name>
        <dbReference type="ChEBI" id="CHEBI:57540"/>
    </ligand>
</feature>
<feature type="binding site" evidence="2">
    <location>
        <position position="215"/>
    </location>
    <ligand>
        <name>NAD(+)</name>
        <dbReference type="ChEBI" id="CHEBI:57540"/>
    </ligand>
</feature>
<feature type="binding site" evidence="2">
    <location>
        <begin position="274"/>
        <end position="276"/>
    </location>
    <ligand>
        <name>NAD(+)</name>
        <dbReference type="ChEBI" id="CHEBI:57540"/>
    </ligand>
</feature>
<feature type="binding site" evidence="2">
    <location>
        <position position="300"/>
    </location>
    <ligand>
        <name>NAD(+)</name>
        <dbReference type="ChEBI" id="CHEBI:57540"/>
    </ligand>
</feature>
<feature type="binding site" evidence="2">
    <location>
        <begin position="324"/>
        <end position="327"/>
    </location>
    <ligand>
        <name>NAD(+)</name>
        <dbReference type="ChEBI" id="CHEBI:57540"/>
    </ligand>
</feature>
<protein>
    <recommendedName>
        <fullName>D-3-phosphoglycerate dehydrogenase 3, chloroplastic</fullName>
        <ecNumber evidence="6">1.1.1.95</ecNumber>
    </recommendedName>
</protein>
<proteinExistence type="evidence at protein level"/>
<dbReference type="EC" id="1.1.1.95" evidence="6"/>
<dbReference type="EMBL" id="AB025624">
    <property type="protein sequence ID" value="BAB02473.1"/>
    <property type="molecule type" value="Genomic_DNA"/>
</dbReference>
<dbReference type="EMBL" id="CP002686">
    <property type="protein sequence ID" value="AEE76246.1"/>
    <property type="molecule type" value="Genomic_DNA"/>
</dbReference>
<dbReference type="EMBL" id="AY042858">
    <property type="protein sequence ID" value="AAK68798.1"/>
    <property type="molecule type" value="mRNA"/>
</dbReference>
<dbReference type="RefSeq" id="NP_566637.2">
    <property type="nucleotide sequence ID" value="NM_112835.4"/>
</dbReference>
<dbReference type="SMR" id="Q9LT69"/>
<dbReference type="BioGRID" id="6815">
    <property type="interactions" value="11"/>
</dbReference>
<dbReference type="FunCoup" id="Q9LT69">
    <property type="interactions" value="2318"/>
</dbReference>
<dbReference type="STRING" id="3702.Q9LT69"/>
<dbReference type="iPTMnet" id="Q9LT69"/>
<dbReference type="PaxDb" id="3702-AT3G19480.1"/>
<dbReference type="ProMEX" id="Q9LT69"/>
<dbReference type="ProteomicsDB" id="232955"/>
<dbReference type="EnsemblPlants" id="AT3G19480.1">
    <property type="protein sequence ID" value="AT3G19480.1"/>
    <property type="gene ID" value="AT3G19480"/>
</dbReference>
<dbReference type="GeneID" id="821482"/>
<dbReference type="Gramene" id="AT3G19480.1">
    <property type="protein sequence ID" value="AT3G19480.1"/>
    <property type="gene ID" value="AT3G19480"/>
</dbReference>
<dbReference type="KEGG" id="ath:AT3G19480"/>
<dbReference type="Araport" id="AT3G19480"/>
<dbReference type="TAIR" id="AT3G19480">
    <property type="gene designation" value="3-PGDH"/>
</dbReference>
<dbReference type="eggNOG" id="KOG0068">
    <property type="taxonomic scope" value="Eukaryota"/>
</dbReference>
<dbReference type="HOGENOM" id="CLU_019796_8_1_1"/>
<dbReference type="InParanoid" id="Q9LT69"/>
<dbReference type="OMA" id="ATSKMMN"/>
<dbReference type="OrthoDB" id="298012at2759"/>
<dbReference type="PhylomeDB" id="Q9LT69"/>
<dbReference type="BioCyc" id="ARA:AT3G19480-MONOMER"/>
<dbReference type="BRENDA" id="1.1.1.95">
    <property type="organism ID" value="399"/>
</dbReference>
<dbReference type="SABIO-RK" id="Q9LT69"/>
<dbReference type="UniPathway" id="UPA00135">
    <property type="reaction ID" value="UER00196"/>
</dbReference>
<dbReference type="PRO" id="PR:Q9LT69"/>
<dbReference type="Proteomes" id="UP000006548">
    <property type="component" value="Chromosome 3"/>
</dbReference>
<dbReference type="ExpressionAtlas" id="Q9LT69">
    <property type="expression patterns" value="baseline and differential"/>
</dbReference>
<dbReference type="GO" id="GO:0009507">
    <property type="term" value="C:chloroplast"/>
    <property type="evidence" value="ECO:0007005"/>
    <property type="project" value="TAIR"/>
</dbReference>
<dbReference type="GO" id="GO:0009570">
    <property type="term" value="C:chloroplast stroma"/>
    <property type="evidence" value="ECO:0000314"/>
    <property type="project" value="TAIR"/>
</dbReference>
<dbReference type="GO" id="GO:0005739">
    <property type="term" value="C:mitochondrion"/>
    <property type="evidence" value="ECO:0007005"/>
    <property type="project" value="TAIR"/>
</dbReference>
<dbReference type="GO" id="GO:0051287">
    <property type="term" value="F:NAD binding"/>
    <property type="evidence" value="ECO:0007669"/>
    <property type="project" value="InterPro"/>
</dbReference>
<dbReference type="GO" id="GO:0003954">
    <property type="term" value="F:NADH dehydrogenase activity"/>
    <property type="evidence" value="ECO:0000314"/>
    <property type="project" value="TAIR"/>
</dbReference>
<dbReference type="GO" id="GO:0004617">
    <property type="term" value="F:phosphoglycerate dehydrogenase activity"/>
    <property type="evidence" value="ECO:0007669"/>
    <property type="project" value="UniProtKB-EC"/>
</dbReference>
<dbReference type="GO" id="GO:0006564">
    <property type="term" value="P:L-serine biosynthetic process"/>
    <property type="evidence" value="ECO:0007669"/>
    <property type="project" value="InterPro"/>
</dbReference>
<dbReference type="GO" id="GO:0009643">
    <property type="term" value="P:photosynthetic acclimation"/>
    <property type="evidence" value="ECO:0000315"/>
    <property type="project" value="TAIR"/>
</dbReference>
<dbReference type="CDD" id="cd04902">
    <property type="entry name" value="ACT_3PGDH-xct"/>
    <property type="match status" value="1"/>
</dbReference>
<dbReference type="CDD" id="cd12173">
    <property type="entry name" value="PGDH_4"/>
    <property type="match status" value="1"/>
</dbReference>
<dbReference type="FunFam" id="3.30.1330.90:FF:000003">
    <property type="entry name" value="D-3-phosphoglycerate dehydrogenase"/>
    <property type="match status" value="1"/>
</dbReference>
<dbReference type="FunFam" id="3.40.50.720:FF:000021">
    <property type="entry name" value="D-3-phosphoglycerate dehydrogenase"/>
    <property type="match status" value="1"/>
</dbReference>
<dbReference type="FunFam" id="3.40.50.720:FF:000616">
    <property type="entry name" value="D-3-phosphoglycerate dehydrogenase 2 chloroplastic"/>
    <property type="match status" value="1"/>
</dbReference>
<dbReference type="FunFam" id="3.30.70.260:FF:000008">
    <property type="entry name" value="D-3-phosphoglycerate dehydrogenase, chloroplastic"/>
    <property type="match status" value="1"/>
</dbReference>
<dbReference type="Gene3D" id="3.30.70.260">
    <property type="match status" value="1"/>
</dbReference>
<dbReference type="Gene3D" id="3.30.1330.90">
    <property type="entry name" value="D-3-phosphoglycerate dehydrogenase, domain 3"/>
    <property type="match status" value="1"/>
</dbReference>
<dbReference type="Gene3D" id="3.40.50.720">
    <property type="entry name" value="NAD(P)-binding Rossmann-like Domain"/>
    <property type="match status" value="2"/>
</dbReference>
<dbReference type="InterPro" id="IPR045865">
    <property type="entry name" value="ACT-like_dom_sf"/>
</dbReference>
<dbReference type="InterPro" id="IPR002912">
    <property type="entry name" value="ACT_dom"/>
</dbReference>
<dbReference type="InterPro" id="IPR015878">
    <property type="entry name" value="Ado_hCys_hydrolase_NAD-bd"/>
</dbReference>
<dbReference type="InterPro" id="IPR029009">
    <property type="entry name" value="ASB_dom_sf"/>
</dbReference>
<dbReference type="InterPro" id="IPR006139">
    <property type="entry name" value="D-isomer_2_OHA_DH_cat_dom"/>
</dbReference>
<dbReference type="InterPro" id="IPR029753">
    <property type="entry name" value="D-isomer_DH_CS"/>
</dbReference>
<dbReference type="InterPro" id="IPR029752">
    <property type="entry name" value="D-isomer_DH_CS1"/>
</dbReference>
<dbReference type="InterPro" id="IPR006140">
    <property type="entry name" value="D-isomer_DH_NAD-bd"/>
</dbReference>
<dbReference type="InterPro" id="IPR036291">
    <property type="entry name" value="NAD(P)-bd_dom_sf"/>
</dbReference>
<dbReference type="InterPro" id="IPR006236">
    <property type="entry name" value="PGDH"/>
</dbReference>
<dbReference type="InterPro" id="IPR045626">
    <property type="entry name" value="PGDH_ASB_dom"/>
</dbReference>
<dbReference type="NCBIfam" id="TIGR01327">
    <property type="entry name" value="PGDH"/>
    <property type="match status" value="1"/>
</dbReference>
<dbReference type="PANTHER" id="PTHR42938:SF5">
    <property type="entry name" value="D-3-PHOSPHOGLYCERATE DEHYDROGENASE 3, CHLOROPLASTIC"/>
    <property type="match status" value="1"/>
</dbReference>
<dbReference type="PANTHER" id="PTHR42938">
    <property type="entry name" value="FORMATE DEHYDROGENASE 1"/>
    <property type="match status" value="1"/>
</dbReference>
<dbReference type="Pfam" id="PF00389">
    <property type="entry name" value="2-Hacid_dh"/>
    <property type="match status" value="1"/>
</dbReference>
<dbReference type="Pfam" id="PF02826">
    <property type="entry name" value="2-Hacid_dh_C"/>
    <property type="match status" value="1"/>
</dbReference>
<dbReference type="Pfam" id="PF01842">
    <property type="entry name" value="ACT"/>
    <property type="match status" value="1"/>
</dbReference>
<dbReference type="Pfam" id="PF19304">
    <property type="entry name" value="PGDH_inter"/>
    <property type="match status" value="1"/>
</dbReference>
<dbReference type="SMART" id="SM00997">
    <property type="entry name" value="AdoHcyase_NAD"/>
    <property type="match status" value="1"/>
</dbReference>
<dbReference type="SUPFAM" id="SSF55021">
    <property type="entry name" value="ACT-like"/>
    <property type="match status" value="1"/>
</dbReference>
<dbReference type="SUPFAM" id="SSF52283">
    <property type="entry name" value="Formate/glycerate dehydrogenase catalytic domain-like"/>
    <property type="match status" value="1"/>
</dbReference>
<dbReference type="SUPFAM" id="SSF51735">
    <property type="entry name" value="NAD(P)-binding Rossmann-fold domains"/>
    <property type="match status" value="1"/>
</dbReference>
<dbReference type="SUPFAM" id="SSF143548">
    <property type="entry name" value="Serine metabolism enzymes domain"/>
    <property type="match status" value="1"/>
</dbReference>
<dbReference type="PROSITE" id="PS51671">
    <property type="entry name" value="ACT"/>
    <property type="match status" value="1"/>
</dbReference>
<dbReference type="PROSITE" id="PS00065">
    <property type="entry name" value="D_2_HYDROXYACID_DH_1"/>
    <property type="match status" value="1"/>
</dbReference>
<dbReference type="PROSITE" id="PS00670">
    <property type="entry name" value="D_2_HYDROXYACID_DH_2"/>
    <property type="match status" value="1"/>
</dbReference>
<dbReference type="PROSITE" id="PS00671">
    <property type="entry name" value="D_2_HYDROXYACID_DH_3"/>
    <property type="match status" value="1"/>
</dbReference>
<sequence>MATSLNLSSIFSSSSRLVTTPSSVFPIRQRRRIILVTSSSSGGGGKPTILVTEKLGQAGIDLLKKYANVDCSYDLSLEELCTKISLCDALIVRSGTKVGRDVFESSRGRLKVVGRAGVGIDNVDLAAATEYGCLVVNAPTANTVAAAEHGIALLTAMARNIAQADASIKAGKWTRNKYVGVSLVGKTLAVLGFGKVGSEVARRARGLGMHVITHDPYAPADRARAIGVELVSFEVAISTADFISLHLPLTAATSKMMNDVTFAMMKKGVRIVNVARGGVIDEEALLRALDSGIVAQAALDVFTVEPPVKDNKLVLHESVTATPHLGASTMEAQEGVSIEVAEAVIGALRGELAATAVNAPMVPLEVLRELKPYVVLAEKLGRLAVQLVTGGSGVNAVKVTYASSRAPDDLDTRLLRAMVIKGIIEPISSVFINLVNSDYIAKQRGVKISEERMVLDGSPENPIEYITVRIANVESRFASALSESGEIKVEGRVKQGVPSLTKVGLFGVDVSLEGSVILCRQVDQPGMIGKVASILGDENVNVSFMSVGRIAPGKQAVMAIGVDEQPSKETLKKIGDIPAIEEFVFLKL</sequence>
<reference key="1">
    <citation type="journal article" date="2000" name="DNA Res.">
        <title>Structural analysis of Arabidopsis thaliana chromosome 3. I. Sequence features of the regions of 4,504,864 bp covered by sixty P1 and TAC clones.</title>
        <authorList>
            <person name="Sato S."/>
            <person name="Nakamura Y."/>
            <person name="Kaneko T."/>
            <person name="Katoh T."/>
            <person name="Asamizu E."/>
            <person name="Tabata S."/>
        </authorList>
    </citation>
    <scope>NUCLEOTIDE SEQUENCE [LARGE SCALE GENOMIC DNA]</scope>
    <source>
        <strain>cv. Columbia</strain>
    </source>
</reference>
<reference key="2">
    <citation type="journal article" date="2017" name="Plant J.">
        <title>Araport11: a complete reannotation of the Arabidopsis thaliana reference genome.</title>
        <authorList>
            <person name="Cheng C.Y."/>
            <person name="Krishnakumar V."/>
            <person name="Chan A.P."/>
            <person name="Thibaud-Nissen F."/>
            <person name="Schobel S."/>
            <person name="Town C.D."/>
        </authorList>
    </citation>
    <scope>GENOME REANNOTATION</scope>
    <source>
        <strain>cv. Columbia</strain>
    </source>
</reference>
<reference key="3">
    <citation type="journal article" date="2003" name="Science">
        <title>Empirical analysis of transcriptional activity in the Arabidopsis genome.</title>
        <authorList>
            <person name="Yamada K."/>
            <person name="Lim J."/>
            <person name="Dale J.M."/>
            <person name="Chen H."/>
            <person name="Shinn P."/>
            <person name="Palm C.J."/>
            <person name="Southwick A.M."/>
            <person name="Wu H.C."/>
            <person name="Kim C.J."/>
            <person name="Nguyen M."/>
            <person name="Pham P.K."/>
            <person name="Cheuk R.F."/>
            <person name="Karlin-Newmann G."/>
            <person name="Liu S.X."/>
            <person name="Lam B."/>
            <person name="Sakano H."/>
            <person name="Wu T."/>
            <person name="Yu G."/>
            <person name="Miranda M."/>
            <person name="Quach H.L."/>
            <person name="Tripp M."/>
            <person name="Chang C.H."/>
            <person name="Lee J.M."/>
            <person name="Toriumi M.J."/>
            <person name="Chan M.M."/>
            <person name="Tang C.C."/>
            <person name="Onodera C.S."/>
            <person name="Deng J.M."/>
            <person name="Akiyama K."/>
            <person name="Ansari Y."/>
            <person name="Arakawa T."/>
            <person name="Banh J."/>
            <person name="Banno F."/>
            <person name="Bowser L."/>
            <person name="Brooks S.Y."/>
            <person name="Carninci P."/>
            <person name="Chao Q."/>
            <person name="Choy N."/>
            <person name="Enju A."/>
            <person name="Goldsmith A.D."/>
            <person name="Gurjal M."/>
            <person name="Hansen N.F."/>
            <person name="Hayashizaki Y."/>
            <person name="Johnson-Hopson C."/>
            <person name="Hsuan V.W."/>
            <person name="Iida K."/>
            <person name="Karnes M."/>
            <person name="Khan S."/>
            <person name="Koesema E."/>
            <person name="Ishida J."/>
            <person name="Jiang P.X."/>
            <person name="Jones T."/>
            <person name="Kawai J."/>
            <person name="Kamiya A."/>
            <person name="Meyers C."/>
            <person name="Nakajima M."/>
            <person name="Narusaka M."/>
            <person name="Seki M."/>
            <person name="Sakurai T."/>
            <person name="Satou M."/>
            <person name="Tamse R."/>
            <person name="Vaysberg M."/>
            <person name="Wallender E.K."/>
            <person name="Wong C."/>
            <person name="Yamamura Y."/>
            <person name="Yuan S."/>
            <person name="Shinozaki K."/>
            <person name="Davis R.W."/>
            <person name="Theologis A."/>
            <person name="Ecker J.R."/>
        </authorList>
    </citation>
    <scope>NUCLEOTIDE SEQUENCE [LARGE SCALE MRNA] OF 73-588</scope>
    <source>
        <strain>cv. Columbia</strain>
    </source>
</reference>
<reference key="4">
    <citation type="journal article" date="2013" name="Plant Cell">
        <title>Arabidopsis phosphoglycerate dehydrogenase1 of the phosphoserine pathway is essential for development and required for ammonium assimilation and tryptophan biosynthesis.</title>
        <authorList>
            <person name="Benstein R.M."/>
            <person name="Ludewig K."/>
            <person name="Wulfert S."/>
            <person name="Wittek S."/>
            <person name="Gigolashvili T."/>
            <person name="Frerigmann H."/>
            <person name="Gierth M."/>
            <person name="Fluegge U.I."/>
            <person name="Krueger S."/>
        </authorList>
    </citation>
    <scope>FUNCTION</scope>
    <scope>CATALYTIC ACTIVITY</scope>
    <scope>BIOPHYSICOCHEMICAL PROPERTIES</scope>
    <scope>ACTIVITY REGULATION</scope>
    <scope>SUBCELLULAR LOCATION</scope>
    <scope>TISSUE SPECIFICITY</scope>
    <source>
        <strain>cv. Columbia</strain>
    </source>
</reference>
<reference key="5">
    <citation type="journal article" date="2013" name="Plant Physiol.">
        <title>Functional characterization of the plastidial 3-phosphoglycerate dehydrogenase family in Arabidopsis.</title>
        <authorList>
            <person name="Toujani W."/>
            <person name="Munoz-Bertomeu J."/>
            <person name="Flores-Tornero M."/>
            <person name="Rosa-Tellez S."/>
            <person name="Anoman A.D."/>
            <person name="Alseekh S."/>
            <person name="Fernie A.R."/>
            <person name="Ros R."/>
        </authorList>
    </citation>
    <scope>FUNCTION</scope>
    <scope>GENE FAMILY</scope>
    <scope>NOMENCLATURE</scope>
    <scope>SUBCELLULAR LOCATION</scope>
    <scope>TISSUE SPECIFICITY</scope>
    <scope>INDUCTION</scope>
    <scope>DISRUPTION PHENOTYPE</scope>
</reference>
<evidence type="ECO:0000250" key="1"/>
<evidence type="ECO:0000250" key="2">
    <source>
        <dbReference type="UniProtKB" id="P0A9T0"/>
    </source>
</evidence>
<evidence type="ECO:0000255" key="3"/>
<evidence type="ECO:0000255" key="4">
    <source>
        <dbReference type="PROSITE-ProRule" id="PRU01007"/>
    </source>
</evidence>
<evidence type="ECO:0000269" key="5">
    <source>
    </source>
</evidence>
<evidence type="ECO:0000269" key="6">
    <source>
    </source>
</evidence>
<evidence type="ECO:0000305" key="7"/>
<gene>
    <name type="primary">PGDH3</name>
    <name type="synonym">3-PGDH</name>
    <name type="ordered locus">At3g19480</name>
    <name type="ORF">MLD14.22</name>
</gene>
<organism>
    <name type="scientific">Arabidopsis thaliana</name>
    <name type="common">Mouse-ear cress</name>
    <dbReference type="NCBI Taxonomy" id="3702"/>
    <lineage>
        <taxon>Eukaryota</taxon>
        <taxon>Viridiplantae</taxon>
        <taxon>Streptophyta</taxon>
        <taxon>Embryophyta</taxon>
        <taxon>Tracheophyta</taxon>
        <taxon>Spermatophyta</taxon>
        <taxon>Magnoliopsida</taxon>
        <taxon>eudicotyledons</taxon>
        <taxon>Gunneridae</taxon>
        <taxon>Pentapetalae</taxon>
        <taxon>rosids</taxon>
        <taxon>malvids</taxon>
        <taxon>Brassicales</taxon>
        <taxon>Brassicaceae</taxon>
        <taxon>Camelineae</taxon>
        <taxon>Arabidopsis</taxon>
    </lineage>
</organism>
<keyword id="KW-0150">Chloroplast</keyword>
<keyword id="KW-0520">NAD</keyword>
<keyword id="KW-0560">Oxidoreductase</keyword>
<keyword id="KW-0934">Plastid</keyword>
<keyword id="KW-1185">Reference proteome</keyword>
<keyword id="KW-0809">Transit peptide</keyword>
<accession>Q9LT69</accession>
<accession>Q94B47</accession>